<keyword id="KW-0963">Cytoplasm</keyword>
<keyword id="KW-0251">Elongation factor</keyword>
<keyword id="KW-0648">Protein biosynthesis</keyword>
<keyword id="KW-1185">Reference proteome</keyword>
<gene>
    <name evidence="1" type="primary">tsf</name>
    <name type="ordered locus">FTT_0314</name>
</gene>
<reference key="1">
    <citation type="journal article" date="2005" name="Nat. Genet.">
        <title>The complete genome sequence of Francisella tularensis, the causative agent of tularemia.</title>
        <authorList>
            <person name="Larsson P."/>
            <person name="Oyston P.C.F."/>
            <person name="Chain P."/>
            <person name="Chu M.C."/>
            <person name="Duffield M."/>
            <person name="Fuxelius H.-H."/>
            <person name="Garcia E."/>
            <person name="Haelltorp G."/>
            <person name="Johansson D."/>
            <person name="Isherwood K.E."/>
            <person name="Karp P.D."/>
            <person name="Larsson E."/>
            <person name="Liu Y."/>
            <person name="Michell S."/>
            <person name="Prior J."/>
            <person name="Prior R."/>
            <person name="Malfatti S."/>
            <person name="Sjoestedt A."/>
            <person name="Svensson K."/>
            <person name="Thompson N."/>
            <person name="Vergez L."/>
            <person name="Wagg J.K."/>
            <person name="Wren B.W."/>
            <person name="Lindler L.E."/>
            <person name="Andersson S.G.E."/>
            <person name="Forsman M."/>
            <person name="Titball R.W."/>
        </authorList>
    </citation>
    <scope>NUCLEOTIDE SEQUENCE [LARGE SCALE GENOMIC DNA]</scope>
    <source>
        <strain>SCHU S4 / Schu 4</strain>
    </source>
</reference>
<evidence type="ECO:0000255" key="1">
    <source>
        <dbReference type="HAMAP-Rule" id="MF_00050"/>
    </source>
</evidence>
<sequence length="289" mass="30988">MSNISAKLVKELRERTGAGMMECKKALVAAAGDIEKAAEEMRISGQAKADKKASRVAAEGVIEVYAADGRAILLEINSETDFVARDETFKKFAQEAVKAAHAANAKTIEEVLAAKTSNGETVEEVRKSLIAKIGENIQVRRVKTVEAETLGAYIHGSKIGVVAALEGGDEDLAKDVAMHVAAANPMVVSGDQVPADVVAKEKEIFTAQAKESGKPAEIIEKMIVGRIRKFLDEVALLGQDFVKDPAIKVEKLVKDKGAKVVNFIRLDVGEGIEKKEEDFAAEVMSQIKG</sequence>
<accession>Q5NHX9</accession>
<dbReference type="EMBL" id="AJ749949">
    <property type="protein sequence ID" value="CAG44947.1"/>
    <property type="molecule type" value="Genomic_DNA"/>
</dbReference>
<dbReference type="RefSeq" id="WP_003021614.1">
    <property type="nucleotide sequence ID" value="NZ_CP010290.1"/>
</dbReference>
<dbReference type="RefSeq" id="YP_169363.1">
    <property type="nucleotide sequence ID" value="NC_006570.2"/>
</dbReference>
<dbReference type="SMR" id="Q5NHX9"/>
<dbReference type="IntAct" id="Q5NHX9">
    <property type="interactions" value="4"/>
</dbReference>
<dbReference type="STRING" id="177416.FTT_0314"/>
<dbReference type="DNASU" id="3191005"/>
<dbReference type="EnsemblBacteria" id="CAG44947">
    <property type="protein sequence ID" value="CAG44947"/>
    <property type="gene ID" value="FTT_0314"/>
</dbReference>
<dbReference type="KEGG" id="ftu:FTT_0314"/>
<dbReference type="eggNOG" id="COG0264">
    <property type="taxonomic scope" value="Bacteria"/>
</dbReference>
<dbReference type="OrthoDB" id="9808348at2"/>
<dbReference type="Proteomes" id="UP000001174">
    <property type="component" value="Chromosome"/>
</dbReference>
<dbReference type="GO" id="GO:0005737">
    <property type="term" value="C:cytoplasm"/>
    <property type="evidence" value="ECO:0007669"/>
    <property type="project" value="UniProtKB-SubCell"/>
</dbReference>
<dbReference type="GO" id="GO:0003746">
    <property type="term" value="F:translation elongation factor activity"/>
    <property type="evidence" value="ECO:0007669"/>
    <property type="project" value="UniProtKB-UniRule"/>
</dbReference>
<dbReference type="CDD" id="cd14275">
    <property type="entry name" value="UBA_EF-Ts"/>
    <property type="match status" value="1"/>
</dbReference>
<dbReference type="FunFam" id="1.10.286.20:FF:000001">
    <property type="entry name" value="Elongation factor Ts"/>
    <property type="match status" value="1"/>
</dbReference>
<dbReference type="FunFam" id="1.10.8.10:FF:000001">
    <property type="entry name" value="Elongation factor Ts"/>
    <property type="match status" value="1"/>
</dbReference>
<dbReference type="Gene3D" id="1.10.286.20">
    <property type="match status" value="1"/>
</dbReference>
<dbReference type="Gene3D" id="1.10.8.10">
    <property type="entry name" value="DNA helicase RuvA subunit, C-terminal domain"/>
    <property type="match status" value="1"/>
</dbReference>
<dbReference type="Gene3D" id="3.30.479.20">
    <property type="entry name" value="Elongation factor Ts, dimerisation domain"/>
    <property type="match status" value="2"/>
</dbReference>
<dbReference type="HAMAP" id="MF_00050">
    <property type="entry name" value="EF_Ts"/>
    <property type="match status" value="1"/>
</dbReference>
<dbReference type="InterPro" id="IPR036402">
    <property type="entry name" value="EF-Ts_dimer_sf"/>
</dbReference>
<dbReference type="InterPro" id="IPR001816">
    <property type="entry name" value="Transl_elong_EFTs/EF1B"/>
</dbReference>
<dbReference type="InterPro" id="IPR014039">
    <property type="entry name" value="Transl_elong_EFTs/EF1B_dimer"/>
</dbReference>
<dbReference type="InterPro" id="IPR018101">
    <property type="entry name" value="Transl_elong_Ts_CS"/>
</dbReference>
<dbReference type="InterPro" id="IPR009060">
    <property type="entry name" value="UBA-like_sf"/>
</dbReference>
<dbReference type="NCBIfam" id="TIGR00116">
    <property type="entry name" value="tsf"/>
    <property type="match status" value="1"/>
</dbReference>
<dbReference type="PANTHER" id="PTHR11741">
    <property type="entry name" value="ELONGATION FACTOR TS"/>
    <property type="match status" value="1"/>
</dbReference>
<dbReference type="PANTHER" id="PTHR11741:SF0">
    <property type="entry name" value="ELONGATION FACTOR TS, MITOCHONDRIAL"/>
    <property type="match status" value="1"/>
</dbReference>
<dbReference type="Pfam" id="PF00889">
    <property type="entry name" value="EF_TS"/>
    <property type="match status" value="1"/>
</dbReference>
<dbReference type="SUPFAM" id="SSF54713">
    <property type="entry name" value="Elongation factor Ts (EF-Ts), dimerisation domain"/>
    <property type="match status" value="2"/>
</dbReference>
<dbReference type="SUPFAM" id="SSF46934">
    <property type="entry name" value="UBA-like"/>
    <property type="match status" value="1"/>
</dbReference>
<dbReference type="PROSITE" id="PS01126">
    <property type="entry name" value="EF_TS_1"/>
    <property type="match status" value="1"/>
</dbReference>
<dbReference type="PROSITE" id="PS01127">
    <property type="entry name" value="EF_TS_2"/>
    <property type="match status" value="1"/>
</dbReference>
<name>EFTS_FRATT</name>
<organism>
    <name type="scientific">Francisella tularensis subsp. tularensis (strain SCHU S4 / Schu 4)</name>
    <dbReference type="NCBI Taxonomy" id="177416"/>
    <lineage>
        <taxon>Bacteria</taxon>
        <taxon>Pseudomonadati</taxon>
        <taxon>Pseudomonadota</taxon>
        <taxon>Gammaproteobacteria</taxon>
        <taxon>Thiotrichales</taxon>
        <taxon>Francisellaceae</taxon>
        <taxon>Francisella</taxon>
    </lineage>
</organism>
<feature type="chain" id="PRO_0000161122" description="Elongation factor Ts">
    <location>
        <begin position="1"/>
        <end position="289"/>
    </location>
</feature>
<feature type="region of interest" description="Involved in Mg(2+) ion dislocation from EF-Tu" evidence="1">
    <location>
        <begin position="80"/>
        <end position="83"/>
    </location>
</feature>
<protein>
    <recommendedName>
        <fullName evidence="1">Elongation factor Ts</fullName>
        <shortName evidence="1">EF-Ts</shortName>
    </recommendedName>
</protein>
<comment type="function">
    <text evidence="1">Associates with the EF-Tu.GDP complex and induces the exchange of GDP to GTP. It remains bound to the aminoacyl-tRNA.EF-Tu.GTP complex up to the GTP hydrolysis stage on the ribosome.</text>
</comment>
<comment type="subcellular location">
    <subcellularLocation>
        <location evidence="1">Cytoplasm</location>
    </subcellularLocation>
</comment>
<comment type="similarity">
    <text evidence="1">Belongs to the EF-Ts family.</text>
</comment>
<proteinExistence type="inferred from homology"/>